<keyword id="KW-0472">Membrane</keyword>
<keyword id="KW-1185">Reference proteome</keyword>
<keyword id="KW-0732">Signal</keyword>
<keyword id="KW-0812">Transmembrane</keyword>
<keyword id="KW-1133">Transmembrane helix</keyword>
<feature type="signal peptide" evidence="1">
    <location>
        <begin position="1"/>
        <end position="18"/>
    </location>
</feature>
<feature type="chain" id="PRO_0000013655" description="Uncharacterized protein AF_1225">
    <location>
        <begin position="19"/>
        <end position="212"/>
    </location>
</feature>
<feature type="transmembrane region" description="Helical" evidence="1">
    <location>
        <begin position="186"/>
        <end position="208"/>
    </location>
</feature>
<proteinExistence type="inferred from homology"/>
<reference key="1">
    <citation type="journal article" date="1997" name="Nature">
        <title>The complete genome sequence of the hyperthermophilic, sulphate-reducing archaeon Archaeoglobus fulgidus.</title>
        <authorList>
            <person name="Klenk H.-P."/>
            <person name="Clayton R.A."/>
            <person name="Tomb J.-F."/>
            <person name="White O."/>
            <person name="Nelson K.E."/>
            <person name="Ketchum K.A."/>
            <person name="Dodson R.J."/>
            <person name="Gwinn M.L."/>
            <person name="Hickey E.K."/>
            <person name="Peterson J.D."/>
            <person name="Richardson D.L."/>
            <person name="Kerlavage A.R."/>
            <person name="Graham D.E."/>
            <person name="Kyrpides N.C."/>
            <person name="Fleischmann R.D."/>
            <person name="Quackenbush J."/>
            <person name="Lee N.H."/>
            <person name="Sutton G.G."/>
            <person name="Gill S.R."/>
            <person name="Kirkness E.F."/>
            <person name="Dougherty B.A."/>
            <person name="McKenney K."/>
            <person name="Adams M.D."/>
            <person name="Loftus B.J."/>
            <person name="Peterson S.N."/>
            <person name="Reich C.I."/>
            <person name="McNeil L.K."/>
            <person name="Badger J.H."/>
            <person name="Glodek A."/>
            <person name="Zhou L."/>
            <person name="Overbeek R."/>
            <person name="Gocayne J.D."/>
            <person name="Weidman J.F."/>
            <person name="McDonald L.A."/>
            <person name="Utterback T.R."/>
            <person name="Cotton M.D."/>
            <person name="Spriggs T."/>
            <person name="Artiach P."/>
            <person name="Kaine B.P."/>
            <person name="Sykes S.M."/>
            <person name="Sadow P.W."/>
            <person name="D'Andrea K.P."/>
            <person name="Bowman C."/>
            <person name="Fujii C."/>
            <person name="Garland S.A."/>
            <person name="Mason T.M."/>
            <person name="Olsen G.J."/>
            <person name="Fraser C.M."/>
            <person name="Smith H.O."/>
            <person name="Woese C.R."/>
            <person name="Venter J.C."/>
        </authorList>
    </citation>
    <scope>NUCLEOTIDE SEQUENCE [LARGE SCALE GENOMIC DNA]</scope>
    <source>
        <strain>ATCC 49558 / DSM 4304 / JCM 9628 / NBRC 100126 / VC-16</strain>
    </source>
</reference>
<organism>
    <name type="scientific">Archaeoglobus fulgidus (strain ATCC 49558 / DSM 4304 / JCM 9628 / NBRC 100126 / VC-16)</name>
    <dbReference type="NCBI Taxonomy" id="224325"/>
    <lineage>
        <taxon>Archaea</taxon>
        <taxon>Methanobacteriati</taxon>
        <taxon>Methanobacteriota</taxon>
        <taxon>Archaeoglobi</taxon>
        <taxon>Archaeoglobales</taxon>
        <taxon>Archaeoglobaceae</taxon>
        <taxon>Archaeoglobus</taxon>
    </lineage>
</organism>
<gene>
    <name type="ordered locus">AF_1225</name>
</gene>
<comment type="subcellular location">
    <subcellularLocation>
        <location evidence="2">Membrane</location>
        <topology evidence="2">Single-pass membrane protein</topology>
    </subcellularLocation>
</comment>
<comment type="similarity">
    <text evidence="2">To A.fulgidus AF_0540.</text>
</comment>
<dbReference type="EMBL" id="AE000782">
    <property type="protein sequence ID" value="AAB90025.1"/>
    <property type="molecule type" value="Genomic_DNA"/>
</dbReference>
<dbReference type="PIR" id="H69402">
    <property type="entry name" value="H69402"/>
</dbReference>
<dbReference type="RefSeq" id="WP_010878720.1">
    <property type="nucleotide sequence ID" value="NC_000917.1"/>
</dbReference>
<dbReference type="SMR" id="O29043"/>
<dbReference type="STRING" id="224325.AF_1225"/>
<dbReference type="PaxDb" id="224325-AF_1225"/>
<dbReference type="EnsemblBacteria" id="AAB90025">
    <property type="protein sequence ID" value="AAB90025"/>
    <property type="gene ID" value="AF_1225"/>
</dbReference>
<dbReference type="KEGG" id="afu:AF_1225"/>
<dbReference type="eggNOG" id="arCOG04220">
    <property type="taxonomic scope" value="Archaea"/>
</dbReference>
<dbReference type="HOGENOM" id="CLU_1297434_0_0_2"/>
<dbReference type="Proteomes" id="UP000002199">
    <property type="component" value="Chromosome"/>
</dbReference>
<dbReference type="GO" id="GO:0016020">
    <property type="term" value="C:membrane"/>
    <property type="evidence" value="ECO:0007669"/>
    <property type="project" value="UniProtKB-SubCell"/>
</dbReference>
<dbReference type="Gene3D" id="1.10.287.1490">
    <property type="match status" value="1"/>
</dbReference>
<dbReference type="InterPro" id="IPR027417">
    <property type="entry name" value="P-loop_NTPase"/>
</dbReference>
<dbReference type="SUPFAM" id="SSF52540">
    <property type="entry name" value="P-loop containing nucleoside triphosphate hydrolases"/>
    <property type="match status" value="1"/>
</dbReference>
<name>Y1225_ARCFU</name>
<accession>O29043</accession>
<sequence>MIPLVALLVLLTLQASPGDIVSVNVTDTATLTVGDSCMYFVDNLQPSINATPGEYEVKIGINCTPGLKEVYADGSVLAQIDVNETTIDYQAYAASLEKENLALQKEVESLKEKLKISQEQIETLKSQLEDLQNKAKMLGIQNELQKQQIEELQKKLERAKTELQKKKSDLDELEEKIRELNRQSSIYRLATFFMVSLFVGSFVALVFVARKE</sequence>
<evidence type="ECO:0000255" key="1"/>
<evidence type="ECO:0000305" key="2"/>
<protein>
    <recommendedName>
        <fullName>Uncharacterized protein AF_1225</fullName>
    </recommendedName>
</protein>